<comment type="function">
    <text evidence="1">The 26S proteasome is involved in the ATP-dependent degradation of ubiquitinated proteins. The regulatory (or ATPase) complex confers ATP dependency and substrate specificity to the 26S complex (By similarity).</text>
</comment>
<comment type="subcellular location">
    <subcellularLocation>
        <location evidence="4">Cytoplasm</location>
    </subcellularLocation>
    <subcellularLocation>
        <location evidence="4">Nucleus</location>
    </subcellularLocation>
</comment>
<comment type="developmental stage">
    <text>Highest expression in vegetatively growing cells. The level of expression falls steadily throughout multicellular development and are not found in dormant or germinating spores.</text>
</comment>
<comment type="similarity">
    <text evidence="4">Belongs to the AAA ATPase family.</text>
</comment>
<gene>
    <name type="primary">psmC4</name>
    <name type="synonym">tbp2</name>
    <name type="synonym">tbpB</name>
    <name type="ORF">DDB_G0289003</name>
</gene>
<protein>
    <recommendedName>
        <fullName>26S proteasome regulatory subunit 6B homolog</fullName>
    </recommendedName>
    <alternativeName>
        <fullName>Tat-binding protein homolog 2</fullName>
    </alternativeName>
</protein>
<accession>P34123</accession>
<accession>Q54I49</accession>
<reference key="1">
    <citation type="journal article" date="1993" name="Biochem. Biophys. Res. Commun.">
        <title>Molecular cloning and developmental regulation of Dictyostelium discoideum homologues of the human and yeast HIV1 Tat-binding protein.</title>
        <authorList>
            <person name="Shaw D.R."/>
            <person name="Ennis H.L."/>
        </authorList>
    </citation>
    <scope>NUCLEOTIDE SEQUENCE [MRNA]</scope>
    <source>
        <strain>AX4</strain>
    </source>
</reference>
<reference key="2">
    <citation type="journal article" date="2005" name="Nature">
        <title>The genome of the social amoeba Dictyostelium discoideum.</title>
        <authorList>
            <person name="Eichinger L."/>
            <person name="Pachebat J.A."/>
            <person name="Gloeckner G."/>
            <person name="Rajandream M.A."/>
            <person name="Sucgang R."/>
            <person name="Berriman M."/>
            <person name="Song J."/>
            <person name="Olsen R."/>
            <person name="Szafranski K."/>
            <person name="Xu Q."/>
            <person name="Tunggal B."/>
            <person name="Kummerfeld S."/>
            <person name="Madera M."/>
            <person name="Konfortov B.A."/>
            <person name="Rivero F."/>
            <person name="Bankier A.T."/>
            <person name="Lehmann R."/>
            <person name="Hamlin N."/>
            <person name="Davies R."/>
            <person name="Gaudet P."/>
            <person name="Fey P."/>
            <person name="Pilcher K."/>
            <person name="Chen G."/>
            <person name="Saunders D."/>
            <person name="Sodergren E.J."/>
            <person name="Davis P."/>
            <person name="Kerhornou A."/>
            <person name="Nie X."/>
            <person name="Hall N."/>
            <person name="Anjard C."/>
            <person name="Hemphill L."/>
            <person name="Bason N."/>
            <person name="Farbrother P."/>
            <person name="Desany B."/>
            <person name="Just E."/>
            <person name="Morio T."/>
            <person name="Rost R."/>
            <person name="Churcher C.M."/>
            <person name="Cooper J."/>
            <person name="Haydock S."/>
            <person name="van Driessche N."/>
            <person name="Cronin A."/>
            <person name="Goodhead I."/>
            <person name="Muzny D.M."/>
            <person name="Mourier T."/>
            <person name="Pain A."/>
            <person name="Lu M."/>
            <person name="Harper D."/>
            <person name="Lindsay R."/>
            <person name="Hauser H."/>
            <person name="James K.D."/>
            <person name="Quiles M."/>
            <person name="Madan Babu M."/>
            <person name="Saito T."/>
            <person name="Buchrieser C."/>
            <person name="Wardroper A."/>
            <person name="Felder M."/>
            <person name="Thangavelu M."/>
            <person name="Johnson D."/>
            <person name="Knights A."/>
            <person name="Loulseged H."/>
            <person name="Mungall K.L."/>
            <person name="Oliver K."/>
            <person name="Price C."/>
            <person name="Quail M.A."/>
            <person name="Urushihara H."/>
            <person name="Hernandez J."/>
            <person name="Rabbinowitsch E."/>
            <person name="Steffen D."/>
            <person name="Sanders M."/>
            <person name="Ma J."/>
            <person name="Kohara Y."/>
            <person name="Sharp S."/>
            <person name="Simmonds M.N."/>
            <person name="Spiegler S."/>
            <person name="Tivey A."/>
            <person name="Sugano S."/>
            <person name="White B."/>
            <person name="Walker D."/>
            <person name="Woodward J.R."/>
            <person name="Winckler T."/>
            <person name="Tanaka Y."/>
            <person name="Shaulsky G."/>
            <person name="Schleicher M."/>
            <person name="Weinstock G.M."/>
            <person name="Rosenthal A."/>
            <person name="Cox E.C."/>
            <person name="Chisholm R.L."/>
            <person name="Gibbs R.A."/>
            <person name="Loomis W.F."/>
            <person name="Platzer M."/>
            <person name="Kay R.R."/>
            <person name="Williams J.G."/>
            <person name="Dear P.H."/>
            <person name="Noegel A.A."/>
            <person name="Barrell B.G."/>
            <person name="Kuspa A."/>
        </authorList>
    </citation>
    <scope>NUCLEOTIDE SEQUENCE [LARGE SCALE GENOMIC DNA]</scope>
    <source>
        <strain>AX4</strain>
    </source>
</reference>
<reference key="3">
    <citation type="submission" date="2009-07" db="UniProtKB">
        <authorList>
            <person name="Bienvenut W.V."/>
            <person name="Ura S."/>
            <person name="Insall R.H."/>
        </authorList>
    </citation>
    <scope>PROTEIN SEQUENCE OF 1-10; 186-197; 215-223; 260-272; 328-336 AND 395-403</scope>
    <scope>ACETYLATION AT MET-1</scope>
    <scope>IDENTIFICATION BY MASS SPECTROMETRY</scope>
    <source>
        <strain>AX2</strain>
    </source>
</reference>
<name>PRS6B_DICDI</name>
<feature type="chain" id="PRO_0000084691" description="26S proteasome regulatory subunit 6B homolog">
    <location>
        <begin position="1"/>
        <end position="403"/>
    </location>
</feature>
<feature type="binding site" evidence="2">
    <location>
        <begin position="191"/>
        <end position="198"/>
    </location>
    <ligand>
        <name>ATP</name>
        <dbReference type="ChEBI" id="CHEBI:30616"/>
    </ligand>
</feature>
<feature type="modified residue" description="N-acetylmethionine" evidence="3">
    <location>
        <position position="1"/>
    </location>
</feature>
<proteinExistence type="evidence at protein level"/>
<sequence>MEELGLATAKVTVTKEASHHREADLYQKMKSLESKLDFFNIQEEYIKYEYKNLKRELLHAQEEVKRIRSVPLLIGQLLEMVDSNTGIVQSTSGSTLCVRILSTIDRELLKPSASVALQRHSNALVDTLPPESDSSIHLLGADEKPSESYSDIGGGDIQKQEMREAVELPLTHHNLYKQIGIDPPRGVLLYGPPGTGKTMLAKAVAHHTSAAFIRVVGSEFVQKYLGEGPRLVRDVFRLARENSPAIIFIDEIDAIATKRFDAQTGADREVQRILMELLNQMDGFDVSVNVKVIMATNRQDTLDPALLRPGRLDRKIEFPLPDRRQKRLIFQVITSKMNLSDEVDLEDYVSRPDKLSGAEIQSICQEAGMHAIRKNRYVILPKDFEKGYKASIKKNTHEFNFYN</sequence>
<dbReference type="EMBL" id="L16578">
    <property type="protein sequence ID" value="AAA33253.1"/>
    <property type="molecule type" value="mRNA"/>
</dbReference>
<dbReference type="EMBL" id="AAFI02000129">
    <property type="protein sequence ID" value="EAL62917.1"/>
    <property type="molecule type" value="Genomic_DNA"/>
</dbReference>
<dbReference type="PIR" id="JN0611">
    <property type="entry name" value="JN0611"/>
</dbReference>
<dbReference type="RefSeq" id="XP_636422.1">
    <property type="nucleotide sequence ID" value="XM_631330.1"/>
</dbReference>
<dbReference type="SMR" id="P34123"/>
<dbReference type="FunCoup" id="P34123">
    <property type="interactions" value="909"/>
</dbReference>
<dbReference type="STRING" id="44689.P34123"/>
<dbReference type="PaxDb" id="44689-DDB0191435"/>
<dbReference type="EnsemblProtists" id="EAL62917">
    <property type="protein sequence ID" value="EAL62917"/>
    <property type="gene ID" value="DDB_G0289003"/>
</dbReference>
<dbReference type="GeneID" id="8626913"/>
<dbReference type="KEGG" id="ddi:DDB_G0289003"/>
<dbReference type="dictyBase" id="DDB_G0289003">
    <property type="gene designation" value="psmC4"/>
</dbReference>
<dbReference type="VEuPathDB" id="AmoebaDB:DDB_G0289003"/>
<dbReference type="eggNOG" id="KOG0727">
    <property type="taxonomic scope" value="Eukaryota"/>
</dbReference>
<dbReference type="HOGENOM" id="CLU_000688_2_0_1"/>
<dbReference type="InParanoid" id="P34123"/>
<dbReference type="OMA" id="QDIGGMD"/>
<dbReference type="PhylomeDB" id="P34123"/>
<dbReference type="Reactome" id="R-DDI-1236978">
    <property type="pathway name" value="Cross-presentation of soluble exogenous antigens (endosomes)"/>
</dbReference>
<dbReference type="Reactome" id="R-DDI-174084">
    <property type="pathway name" value="Autodegradation of Cdh1 by Cdh1:APC/C"/>
</dbReference>
<dbReference type="Reactome" id="R-DDI-174154">
    <property type="pathway name" value="APC/C:Cdc20 mediated degradation of Securin"/>
</dbReference>
<dbReference type="Reactome" id="R-DDI-174178">
    <property type="pathway name" value="APC/C:Cdh1 mediated degradation of Cdc20 and other APC/C:Cdh1 targeted proteins in late mitosis/early G1"/>
</dbReference>
<dbReference type="Reactome" id="R-DDI-2467813">
    <property type="pathway name" value="Separation of Sister Chromatids"/>
</dbReference>
<dbReference type="Reactome" id="R-DDI-349425">
    <property type="pathway name" value="Autodegradation of the E3 ubiquitin ligase COP1"/>
</dbReference>
<dbReference type="Reactome" id="R-DDI-382556">
    <property type="pathway name" value="ABC-family proteins mediated transport"/>
</dbReference>
<dbReference type="Reactome" id="R-DDI-450408">
    <property type="pathway name" value="AUF1 (hnRNP D0) binds and destabilizes mRNA"/>
</dbReference>
<dbReference type="Reactome" id="R-DDI-4641258">
    <property type="pathway name" value="Degradation of DVL"/>
</dbReference>
<dbReference type="Reactome" id="R-DDI-5632684">
    <property type="pathway name" value="Hedgehog 'on' state"/>
</dbReference>
<dbReference type="Reactome" id="R-DDI-5658442">
    <property type="pathway name" value="Regulation of RAS by GAPs"/>
</dbReference>
<dbReference type="Reactome" id="R-DDI-5687128">
    <property type="pathway name" value="MAPK6/MAPK4 signaling"/>
</dbReference>
<dbReference type="Reactome" id="R-DDI-5689603">
    <property type="pathway name" value="UCH proteinases"/>
</dbReference>
<dbReference type="Reactome" id="R-DDI-5689880">
    <property type="pathway name" value="Ub-specific processing proteases"/>
</dbReference>
<dbReference type="Reactome" id="R-DDI-68949">
    <property type="pathway name" value="Orc1 removal from chromatin"/>
</dbReference>
<dbReference type="Reactome" id="R-DDI-69017">
    <property type="pathway name" value="CDK-mediated phosphorylation and removal of Cdc6"/>
</dbReference>
<dbReference type="Reactome" id="R-DDI-69601">
    <property type="pathway name" value="Ubiquitin Mediated Degradation of Phosphorylated Cdc25A"/>
</dbReference>
<dbReference type="Reactome" id="R-DDI-8854050">
    <property type="pathway name" value="FBXL7 down-regulates AURKA during mitotic entry and in early mitosis"/>
</dbReference>
<dbReference type="Reactome" id="R-DDI-8948751">
    <property type="pathway name" value="Regulation of PTEN stability and activity"/>
</dbReference>
<dbReference type="Reactome" id="R-DDI-8951664">
    <property type="pathway name" value="Neddylation"/>
</dbReference>
<dbReference type="Reactome" id="R-DDI-9755511">
    <property type="pathway name" value="KEAP1-NFE2L2 pathway"/>
</dbReference>
<dbReference type="Reactome" id="R-DDI-983168">
    <property type="pathway name" value="Antigen processing: Ubiquitination &amp; Proteasome degradation"/>
</dbReference>
<dbReference type="Reactome" id="R-DDI-9907900">
    <property type="pathway name" value="Proteasome assembly"/>
</dbReference>
<dbReference type="PRO" id="PR:P34123"/>
<dbReference type="Proteomes" id="UP000002195">
    <property type="component" value="Chromosome 5"/>
</dbReference>
<dbReference type="GO" id="GO:0005634">
    <property type="term" value="C:nucleus"/>
    <property type="evidence" value="ECO:0007669"/>
    <property type="project" value="UniProtKB-SubCell"/>
</dbReference>
<dbReference type="GO" id="GO:0045335">
    <property type="term" value="C:phagocytic vesicle"/>
    <property type="evidence" value="ECO:0007005"/>
    <property type="project" value="dictyBase"/>
</dbReference>
<dbReference type="GO" id="GO:0005838">
    <property type="term" value="C:proteasome regulatory particle"/>
    <property type="evidence" value="ECO:0000250"/>
    <property type="project" value="dictyBase"/>
</dbReference>
<dbReference type="GO" id="GO:0008540">
    <property type="term" value="C:proteasome regulatory particle, base subcomplex"/>
    <property type="evidence" value="ECO:0000318"/>
    <property type="project" value="GO_Central"/>
</dbReference>
<dbReference type="GO" id="GO:0005524">
    <property type="term" value="F:ATP binding"/>
    <property type="evidence" value="ECO:0007669"/>
    <property type="project" value="UniProtKB-KW"/>
</dbReference>
<dbReference type="GO" id="GO:0016887">
    <property type="term" value="F:ATP hydrolysis activity"/>
    <property type="evidence" value="ECO:0007669"/>
    <property type="project" value="InterPro"/>
</dbReference>
<dbReference type="GO" id="GO:0036402">
    <property type="term" value="F:proteasome-activating activity"/>
    <property type="evidence" value="ECO:0000318"/>
    <property type="project" value="GO_Central"/>
</dbReference>
<dbReference type="GO" id="GO:0006972">
    <property type="term" value="P:hyperosmotic response"/>
    <property type="evidence" value="ECO:0000270"/>
    <property type="project" value="dictyBase"/>
</dbReference>
<dbReference type="GO" id="GO:0043161">
    <property type="term" value="P:proteasome-mediated ubiquitin-dependent protein catabolic process"/>
    <property type="evidence" value="ECO:0000318"/>
    <property type="project" value="GO_Central"/>
</dbReference>
<dbReference type="CDD" id="cd19502">
    <property type="entry name" value="RecA-like_PAN_like"/>
    <property type="match status" value="1"/>
</dbReference>
<dbReference type="FunFam" id="1.10.8.60:FF:000018">
    <property type="entry name" value="26S protease regulatory subunit 6B"/>
    <property type="match status" value="1"/>
</dbReference>
<dbReference type="FunFam" id="2.40.50.140:FF:000046">
    <property type="entry name" value="26S protease regulatory subunit 6B"/>
    <property type="match status" value="1"/>
</dbReference>
<dbReference type="FunFam" id="3.40.50.300:FF:000033">
    <property type="entry name" value="26S protease regulatory subunit 6B"/>
    <property type="match status" value="1"/>
</dbReference>
<dbReference type="Gene3D" id="1.10.8.60">
    <property type="match status" value="1"/>
</dbReference>
<dbReference type="Gene3D" id="2.40.50.140">
    <property type="entry name" value="Nucleic acid-binding proteins"/>
    <property type="match status" value="1"/>
</dbReference>
<dbReference type="Gene3D" id="3.40.50.300">
    <property type="entry name" value="P-loop containing nucleotide triphosphate hydrolases"/>
    <property type="match status" value="1"/>
</dbReference>
<dbReference type="InterPro" id="IPR050221">
    <property type="entry name" value="26S_Proteasome_ATPase"/>
</dbReference>
<dbReference type="InterPro" id="IPR003593">
    <property type="entry name" value="AAA+_ATPase"/>
</dbReference>
<dbReference type="InterPro" id="IPR041569">
    <property type="entry name" value="AAA_lid_3"/>
</dbReference>
<dbReference type="InterPro" id="IPR003959">
    <property type="entry name" value="ATPase_AAA_core"/>
</dbReference>
<dbReference type="InterPro" id="IPR003960">
    <property type="entry name" value="ATPase_AAA_CS"/>
</dbReference>
<dbReference type="InterPro" id="IPR012340">
    <property type="entry name" value="NA-bd_OB-fold"/>
</dbReference>
<dbReference type="InterPro" id="IPR027417">
    <property type="entry name" value="P-loop_NTPase"/>
</dbReference>
<dbReference type="InterPro" id="IPR032501">
    <property type="entry name" value="Prot_ATP_ID_OB_2nd"/>
</dbReference>
<dbReference type="PANTHER" id="PTHR23073">
    <property type="entry name" value="26S PROTEASOME REGULATORY SUBUNIT"/>
    <property type="match status" value="1"/>
</dbReference>
<dbReference type="Pfam" id="PF00004">
    <property type="entry name" value="AAA"/>
    <property type="match status" value="1"/>
</dbReference>
<dbReference type="Pfam" id="PF17862">
    <property type="entry name" value="AAA_lid_3"/>
    <property type="match status" value="1"/>
</dbReference>
<dbReference type="Pfam" id="PF16450">
    <property type="entry name" value="Prot_ATP_ID_OB_C"/>
    <property type="match status" value="1"/>
</dbReference>
<dbReference type="SMART" id="SM00382">
    <property type="entry name" value="AAA"/>
    <property type="match status" value="1"/>
</dbReference>
<dbReference type="SUPFAM" id="SSF52540">
    <property type="entry name" value="P-loop containing nucleoside triphosphate hydrolases"/>
    <property type="match status" value="1"/>
</dbReference>
<dbReference type="PROSITE" id="PS00674">
    <property type="entry name" value="AAA"/>
    <property type="match status" value="1"/>
</dbReference>
<evidence type="ECO:0000250" key="1"/>
<evidence type="ECO:0000255" key="2"/>
<evidence type="ECO:0000269" key="3">
    <source ref="3"/>
</evidence>
<evidence type="ECO:0000305" key="4"/>
<organism>
    <name type="scientific">Dictyostelium discoideum</name>
    <name type="common">Social amoeba</name>
    <dbReference type="NCBI Taxonomy" id="44689"/>
    <lineage>
        <taxon>Eukaryota</taxon>
        <taxon>Amoebozoa</taxon>
        <taxon>Evosea</taxon>
        <taxon>Eumycetozoa</taxon>
        <taxon>Dictyostelia</taxon>
        <taxon>Dictyosteliales</taxon>
        <taxon>Dictyosteliaceae</taxon>
        <taxon>Dictyostelium</taxon>
    </lineage>
</organism>
<keyword id="KW-0007">Acetylation</keyword>
<keyword id="KW-0067">ATP-binding</keyword>
<keyword id="KW-0963">Cytoplasm</keyword>
<keyword id="KW-0903">Direct protein sequencing</keyword>
<keyword id="KW-0547">Nucleotide-binding</keyword>
<keyword id="KW-0539">Nucleus</keyword>
<keyword id="KW-0647">Proteasome</keyword>
<keyword id="KW-1185">Reference proteome</keyword>